<proteinExistence type="inferred from homology"/>
<protein>
    <recommendedName>
        <fullName>Neurotrophin-3</fullName>
        <shortName>NT-3</shortName>
    </recommendedName>
</protein>
<name>NTF3_LICTR</name>
<dbReference type="EMBL" id="DQ465578">
    <property type="protein sequence ID" value="ABE76340.1"/>
    <property type="molecule type" value="Genomic_DNA"/>
</dbReference>
<dbReference type="SMR" id="Q1KN10"/>
<dbReference type="GlyCosmos" id="Q1KN10">
    <property type="glycosylation" value="1 site, No reported glycans"/>
</dbReference>
<dbReference type="GO" id="GO:0030424">
    <property type="term" value="C:axon"/>
    <property type="evidence" value="ECO:0007669"/>
    <property type="project" value="TreeGrafter"/>
</dbReference>
<dbReference type="GO" id="GO:0030425">
    <property type="term" value="C:dendrite"/>
    <property type="evidence" value="ECO:0007669"/>
    <property type="project" value="TreeGrafter"/>
</dbReference>
<dbReference type="GO" id="GO:0005615">
    <property type="term" value="C:extracellular space"/>
    <property type="evidence" value="ECO:0007669"/>
    <property type="project" value="TreeGrafter"/>
</dbReference>
<dbReference type="GO" id="GO:0008021">
    <property type="term" value="C:synaptic vesicle"/>
    <property type="evidence" value="ECO:0007669"/>
    <property type="project" value="TreeGrafter"/>
</dbReference>
<dbReference type="GO" id="GO:0008083">
    <property type="term" value="F:growth factor activity"/>
    <property type="evidence" value="ECO:0007669"/>
    <property type="project" value="UniProtKB-KW"/>
</dbReference>
<dbReference type="GO" id="GO:0005163">
    <property type="term" value="F:nerve growth factor receptor binding"/>
    <property type="evidence" value="ECO:0007669"/>
    <property type="project" value="TreeGrafter"/>
</dbReference>
<dbReference type="GO" id="GO:0007169">
    <property type="term" value="P:cell surface receptor protein tyrosine kinase signaling pathway"/>
    <property type="evidence" value="ECO:0007669"/>
    <property type="project" value="TreeGrafter"/>
</dbReference>
<dbReference type="GO" id="GO:0050804">
    <property type="term" value="P:modulation of chemical synaptic transmission"/>
    <property type="evidence" value="ECO:0007669"/>
    <property type="project" value="TreeGrafter"/>
</dbReference>
<dbReference type="GO" id="GO:0043524">
    <property type="term" value="P:negative regulation of neuron apoptotic process"/>
    <property type="evidence" value="ECO:0007669"/>
    <property type="project" value="TreeGrafter"/>
</dbReference>
<dbReference type="GO" id="GO:0021675">
    <property type="term" value="P:nerve development"/>
    <property type="evidence" value="ECO:0007669"/>
    <property type="project" value="TreeGrafter"/>
</dbReference>
<dbReference type="GO" id="GO:0038180">
    <property type="term" value="P:nerve growth factor signaling pathway"/>
    <property type="evidence" value="ECO:0007669"/>
    <property type="project" value="TreeGrafter"/>
</dbReference>
<dbReference type="GO" id="GO:0048812">
    <property type="term" value="P:neuron projection morphogenesis"/>
    <property type="evidence" value="ECO:0007669"/>
    <property type="project" value="TreeGrafter"/>
</dbReference>
<dbReference type="Gene3D" id="2.10.90.10">
    <property type="entry name" value="Cystine-knot cytokines"/>
    <property type="match status" value="1"/>
</dbReference>
<dbReference type="InterPro" id="IPR029034">
    <property type="entry name" value="Cystine-knot_cytokine"/>
</dbReference>
<dbReference type="InterPro" id="IPR020408">
    <property type="entry name" value="Nerve_growth_factor-like"/>
</dbReference>
<dbReference type="InterPro" id="IPR002072">
    <property type="entry name" value="Nerve_growth_factor-rel"/>
</dbReference>
<dbReference type="InterPro" id="IPR015578">
    <property type="entry name" value="Neurotrophin-3"/>
</dbReference>
<dbReference type="InterPro" id="IPR045815">
    <property type="entry name" value="NTF3_N"/>
</dbReference>
<dbReference type="PANTHER" id="PTHR11589">
    <property type="entry name" value="NERVE GROWTH FACTOR NGF -RELATED"/>
    <property type="match status" value="1"/>
</dbReference>
<dbReference type="PANTHER" id="PTHR11589:SF4">
    <property type="entry name" value="NEUROTROPHIN-3"/>
    <property type="match status" value="1"/>
</dbReference>
<dbReference type="Pfam" id="PF00243">
    <property type="entry name" value="NGF"/>
    <property type="match status" value="1"/>
</dbReference>
<dbReference type="Pfam" id="PF19338">
    <property type="entry name" value="NTF3_N"/>
    <property type="match status" value="1"/>
</dbReference>
<dbReference type="PIRSF" id="PIRSF001789">
    <property type="entry name" value="NGF"/>
    <property type="match status" value="1"/>
</dbReference>
<dbReference type="PRINTS" id="PR01914">
    <property type="entry name" value="NEUROTROPHN3"/>
</dbReference>
<dbReference type="SMART" id="SM00140">
    <property type="entry name" value="NGF"/>
    <property type="match status" value="1"/>
</dbReference>
<dbReference type="SUPFAM" id="SSF57501">
    <property type="entry name" value="Cystine-knot cytokines"/>
    <property type="match status" value="1"/>
</dbReference>
<dbReference type="PROSITE" id="PS50270">
    <property type="entry name" value="NGF_2"/>
    <property type="match status" value="1"/>
</dbReference>
<gene>
    <name type="primary">NTF3</name>
</gene>
<sequence length="163" mass="18324">IQSTSMDQGILTEDSMNSFIRTLIQAGIWKNKVPKQTARTKDGMQTTVKKTEAEADAMASKDTRLGFQPVVSVDAELLRQQRRFSSPRVLLSENTPLEPPPLYLTEEPMVLNRTSRRKREGKSHRGEYSVCDSESRWVTDKSSAVDIRGHQVTVLGEIRMGSS</sequence>
<reference key="1">
    <citation type="journal article" date="2006" name="Mol. Phylogenet. Evol.">
        <title>Dispersal and vicariance: the complex evolutionary history of boid snakes.</title>
        <authorList>
            <person name="Noonan B.P."/>
            <person name="Chippindale P.T."/>
        </authorList>
    </citation>
    <scope>NUCLEOTIDE SEQUENCE [GENOMIC DNA]</scope>
</reference>
<organism>
    <name type="scientific">Lichanura trivirgata</name>
    <name type="common">Rosy boa</name>
    <name type="synonym">Charina trivirgata</name>
    <dbReference type="NCBI Taxonomy" id="51879"/>
    <lineage>
        <taxon>Eukaryota</taxon>
        <taxon>Metazoa</taxon>
        <taxon>Chordata</taxon>
        <taxon>Craniata</taxon>
        <taxon>Vertebrata</taxon>
        <taxon>Euteleostomi</taxon>
        <taxon>Lepidosauria</taxon>
        <taxon>Squamata</taxon>
        <taxon>Bifurcata</taxon>
        <taxon>Unidentata</taxon>
        <taxon>Episquamata</taxon>
        <taxon>Toxicofera</taxon>
        <taxon>Serpentes</taxon>
        <taxon>Henophidia</taxon>
        <taxon>Boidae</taxon>
        <taxon>Erycinae</taxon>
        <taxon>Lichanura</taxon>
    </lineage>
</organism>
<evidence type="ECO:0000250" key="1"/>
<evidence type="ECO:0000255" key="2"/>
<evidence type="ECO:0000256" key="3">
    <source>
        <dbReference type="SAM" id="MobiDB-lite"/>
    </source>
</evidence>
<evidence type="ECO:0000305" key="4"/>
<comment type="function">
    <text evidence="1">Seems to promote the survival of visceral and proprioceptive sensory neurons.</text>
</comment>
<comment type="subcellular location">
    <subcellularLocation>
        <location evidence="1">Secreted</location>
    </subcellularLocation>
</comment>
<comment type="similarity">
    <text evidence="4">Belongs to the NGF-beta family.</text>
</comment>
<accession>Q1KN10</accession>
<feature type="signal peptide" evidence="2">
    <location>
        <begin position="1" status="less than"/>
        <end position="3"/>
    </location>
</feature>
<feature type="propeptide" id="PRO_0000346719" evidence="1">
    <location>
        <begin position="4"/>
        <end position="119"/>
    </location>
</feature>
<feature type="chain" id="PRO_0000346720" description="Neurotrophin-3">
    <location>
        <begin position="120"/>
        <end position="163" status="greater than"/>
    </location>
</feature>
<feature type="region of interest" description="Disordered" evidence="3">
    <location>
        <begin position="114"/>
        <end position="133"/>
    </location>
</feature>
<feature type="compositionally biased region" description="Basic and acidic residues" evidence="3">
    <location>
        <begin position="123"/>
        <end position="133"/>
    </location>
</feature>
<feature type="glycosylation site" description="N-linked (GlcNAc...) asparagine" evidence="2">
    <location>
        <position position="112"/>
    </location>
</feature>
<feature type="non-terminal residue">
    <location>
        <position position="1"/>
    </location>
</feature>
<feature type="non-terminal residue">
    <location>
        <position position="163"/>
    </location>
</feature>
<keyword id="KW-0165">Cleavage on pair of basic residues</keyword>
<keyword id="KW-0325">Glycoprotein</keyword>
<keyword id="KW-0339">Growth factor</keyword>
<keyword id="KW-0964">Secreted</keyword>
<keyword id="KW-0732">Signal</keyword>